<sequence length="62" mass="7193">MEWKTCSFCEGTIEPGCGKKYVKKDGSVMHFCSSKCEKNFKLGRVGRKLKWTNTFKRINRGQ</sequence>
<comment type="function">
    <text evidence="1">Binds to the 23S rRNA.</text>
</comment>
<comment type="cofactor">
    <cofactor evidence="1">
        <name>Zn(2+)</name>
        <dbReference type="ChEBI" id="CHEBI:29105"/>
    </cofactor>
    <text evidence="1">Binds 1 zinc ion per subunit.</text>
</comment>
<comment type="subunit">
    <text evidence="1">Part of the 50S ribosomal subunit. Forms a cluster with proteins L3 and L14.</text>
</comment>
<comment type="similarity">
    <text evidence="1">Belongs to the eukaryotic ribosomal protein eL24 family.</text>
</comment>
<organism>
    <name type="scientific">Methanococcus maripaludis (strain C5 / ATCC BAA-1333)</name>
    <dbReference type="NCBI Taxonomy" id="402880"/>
    <lineage>
        <taxon>Archaea</taxon>
        <taxon>Methanobacteriati</taxon>
        <taxon>Methanobacteriota</taxon>
        <taxon>Methanomada group</taxon>
        <taxon>Methanococci</taxon>
        <taxon>Methanococcales</taxon>
        <taxon>Methanococcaceae</taxon>
        <taxon>Methanococcus</taxon>
    </lineage>
</organism>
<reference key="1">
    <citation type="submission" date="2007-03" db="EMBL/GenBank/DDBJ databases">
        <title>Complete sequence of chromosome of Methanococcus maripaludis C5.</title>
        <authorList>
            <consortium name="US DOE Joint Genome Institute"/>
            <person name="Copeland A."/>
            <person name="Lucas S."/>
            <person name="Lapidus A."/>
            <person name="Barry K."/>
            <person name="Glavina del Rio T."/>
            <person name="Dalin E."/>
            <person name="Tice H."/>
            <person name="Pitluck S."/>
            <person name="Chertkov O."/>
            <person name="Brettin T."/>
            <person name="Bruce D."/>
            <person name="Han C."/>
            <person name="Detter J.C."/>
            <person name="Schmutz J."/>
            <person name="Larimer F."/>
            <person name="Land M."/>
            <person name="Hauser L."/>
            <person name="Kyrpides N."/>
            <person name="Mikhailova N."/>
            <person name="Sieprawska-Lupa M."/>
            <person name="Whitman W.B."/>
            <person name="Richardson P."/>
        </authorList>
    </citation>
    <scope>NUCLEOTIDE SEQUENCE [LARGE SCALE GENOMIC DNA]</scope>
    <source>
        <strain>C5 / ATCC BAA-1333</strain>
    </source>
</reference>
<feature type="chain" id="PRO_1000017354" description="Large ribosomal subunit protein eL24">
    <location>
        <begin position="1"/>
        <end position="62"/>
    </location>
</feature>
<feature type="zinc finger region" description="C4-type" evidence="1">
    <location>
        <begin position="6"/>
        <end position="36"/>
    </location>
</feature>
<feature type="binding site" evidence="1">
    <location>
        <position position="6"/>
    </location>
    <ligand>
        <name>Zn(2+)</name>
        <dbReference type="ChEBI" id="CHEBI:29105"/>
    </ligand>
</feature>
<feature type="binding site" evidence="1">
    <location>
        <position position="9"/>
    </location>
    <ligand>
        <name>Zn(2+)</name>
        <dbReference type="ChEBI" id="CHEBI:29105"/>
    </ligand>
</feature>
<feature type="binding site" evidence="1">
    <location>
        <position position="32"/>
    </location>
    <ligand>
        <name>Zn(2+)</name>
        <dbReference type="ChEBI" id="CHEBI:29105"/>
    </ligand>
</feature>
<feature type="binding site" evidence="1">
    <location>
        <position position="36"/>
    </location>
    <ligand>
        <name>Zn(2+)</name>
        <dbReference type="ChEBI" id="CHEBI:29105"/>
    </ligand>
</feature>
<keyword id="KW-0479">Metal-binding</keyword>
<keyword id="KW-0687">Ribonucleoprotein</keyword>
<keyword id="KW-0689">Ribosomal protein</keyword>
<keyword id="KW-0694">RNA-binding</keyword>
<keyword id="KW-0699">rRNA-binding</keyword>
<keyword id="KW-0862">Zinc</keyword>
<keyword id="KW-0863">Zinc-finger</keyword>
<protein>
    <recommendedName>
        <fullName evidence="1">Large ribosomal subunit protein eL24</fullName>
    </recommendedName>
    <alternativeName>
        <fullName evidence="2">50S ribosomal protein L24e</fullName>
    </alternativeName>
</protein>
<proteinExistence type="inferred from homology"/>
<dbReference type="EMBL" id="CP000609">
    <property type="protein sequence ID" value="ABO35271.1"/>
    <property type="molecule type" value="Genomic_DNA"/>
</dbReference>
<dbReference type="RefSeq" id="WP_011170583.1">
    <property type="nucleotide sequence ID" value="NC_009135.1"/>
</dbReference>
<dbReference type="SMR" id="A4FYI7"/>
<dbReference type="STRING" id="402880.MmarC5_0965"/>
<dbReference type="GeneID" id="4928550"/>
<dbReference type="KEGG" id="mmq:MmarC5_0965"/>
<dbReference type="eggNOG" id="arCOG01950">
    <property type="taxonomic scope" value="Archaea"/>
</dbReference>
<dbReference type="HOGENOM" id="CLU_190191_0_0_2"/>
<dbReference type="OrthoDB" id="55506at2157"/>
<dbReference type="Proteomes" id="UP000000253">
    <property type="component" value="Chromosome"/>
</dbReference>
<dbReference type="GO" id="GO:1990904">
    <property type="term" value="C:ribonucleoprotein complex"/>
    <property type="evidence" value="ECO:0007669"/>
    <property type="project" value="UniProtKB-KW"/>
</dbReference>
<dbReference type="GO" id="GO:0005840">
    <property type="term" value="C:ribosome"/>
    <property type="evidence" value="ECO:0007669"/>
    <property type="project" value="UniProtKB-KW"/>
</dbReference>
<dbReference type="GO" id="GO:0019843">
    <property type="term" value="F:rRNA binding"/>
    <property type="evidence" value="ECO:0007669"/>
    <property type="project" value="UniProtKB-UniRule"/>
</dbReference>
<dbReference type="GO" id="GO:0003735">
    <property type="term" value="F:structural constituent of ribosome"/>
    <property type="evidence" value="ECO:0007669"/>
    <property type="project" value="InterPro"/>
</dbReference>
<dbReference type="GO" id="GO:0008270">
    <property type="term" value="F:zinc ion binding"/>
    <property type="evidence" value="ECO:0007669"/>
    <property type="project" value="UniProtKB-UniRule"/>
</dbReference>
<dbReference type="GO" id="GO:0006412">
    <property type="term" value="P:translation"/>
    <property type="evidence" value="ECO:0007669"/>
    <property type="project" value="UniProtKB-UniRule"/>
</dbReference>
<dbReference type="CDD" id="cd00472">
    <property type="entry name" value="Ribosomal_L24e_L24"/>
    <property type="match status" value="1"/>
</dbReference>
<dbReference type="Gene3D" id="2.30.170.20">
    <property type="entry name" value="Ribosomal protein L24e"/>
    <property type="match status" value="1"/>
</dbReference>
<dbReference type="HAMAP" id="MF_00773">
    <property type="entry name" value="Ribosomal_eL24"/>
    <property type="match status" value="1"/>
</dbReference>
<dbReference type="InterPro" id="IPR038630">
    <property type="entry name" value="L24e/L24_sf"/>
</dbReference>
<dbReference type="InterPro" id="IPR056366">
    <property type="entry name" value="Ribosomal_eL24"/>
</dbReference>
<dbReference type="InterPro" id="IPR055345">
    <property type="entry name" value="Ribosomal_eL24-rel_arc"/>
</dbReference>
<dbReference type="InterPro" id="IPR000988">
    <property type="entry name" value="Ribosomal_eL24-rel_N"/>
</dbReference>
<dbReference type="InterPro" id="IPR023442">
    <property type="entry name" value="Ribosomal_eL24_CS"/>
</dbReference>
<dbReference type="InterPro" id="IPR011017">
    <property type="entry name" value="TRASH_dom"/>
</dbReference>
<dbReference type="NCBIfam" id="NF034186">
    <property type="entry name" value="PRK14891.1-1"/>
    <property type="match status" value="1"/>
</dbReference>
<dbReference type="PANTHER" id="PTHR10792">
    <property type="entry name" value="60S RIBOSOMAL PROTEIN L24"/>
    <property type="match status" value="1"/>
</dbReference>
<dbReference type="PANTHER" id="PTHR10792:SF1">
    <property type="entry name" value="RIBOSOMAL PROTEIN L24"/>
    <property type="match status" value="1"/>
</dbReference>
<dbReference type="Pfam" id="PF01246">
    <property type="entry name" value="Ribosomal_L24e"/>
    <property type="match status" value="1"/>
</dbReference>
<dbReference type="SMART" id="SM00746">
    <property type="entry name" value="TRASH"/>
    <property type="match status" value="1"/>
</dbReference>
<dbReference type="SUPFAM" id="SSF57716">
    <property type="entry name" value="Glucocorticoid receptor-like (DNA-binding domain)"/>
    <property type="match status" value="1"/>
</dbReference>
<dbReference type="PROSITE" id="PS01073">
    <property type="entry name" value="RIBOSOMAL_L24E"/>
    <property type="match status" value="1"/>
</dbReference>
<evidence type="ECO:0000255" key="1">
    <source>
        <dbReference type="HAMAP-Rule" id="MF_00773"/>
    </source>
</evidence>
<evidence type="ECO:0000305" key="2"/>
<gene>
    <name evidence="1" type="primary">rpl24e</name>
    <name type="ordered locus">MmarC5_0965</name>
</gene>
<accession>A4FYI7</accession>
<name>RL24E_METM5</name>